<keyword id="KW-1185">Reference proteome</keyword>
<keyword id="KW-0678">Repressor</keyword>
<keyword id="KW-0687">Ribonucleoprotein</keyword>
<keyword id="KW-0689">Ribosomal protein</keyword>
<keyword id="KW-0694">RNA-binding</keyword>
<keyword id="KW-0699">rRNA-binding</keyword>
<keyword id="KW-0810">Translation regulation</keyword>
<keyword id="KW-0820">tRNA-binding</keyword>
<gene>
    <name evidence="1" type="primary">rplA</name>
    <name type="ordered locus">CBU_0227</name>
</gene>
<name>RL1_COXBU</name>
<reference key="1">
    <citation type="journal article" date="2003" name="Proc. Natl. Acad. Sci. U.S.A.">
        <title>Complete genome sequence of the Q-fever pathogen, Coxiella burnetii.</title>
        <authorList>
            <person name="Seshadri R."/>
            <person name="Paulsen I.T."/>
            <person name="Eisen J.A."/>
            <person name="Read T.D."/>
            <person name="Nelson K.E."/>
            <person name="Nelson W.C."/>
            <person name="Ward N.L."/>
            <person name="Tettelin H."/>
            <person name="Davidsen T.M."/>
            <person name="Beanan M.J."/>
            <person name="DeBoy R.T."/>
            <person name="Daugherty S.C."/>
            <person name="Brinkac L.M."/>
            <person name="Madupu R."/>
            <person name="Dodson R.J."/>
            <person name="Khouri H.M."/>
            <person name="Lee K.H."/>
            <person name="Carty H.A."/>
            <person name="Scanlan D."/>
            <person name="Heinzen R.A."/>
            <person name="Thompson H.A."/>
            <person name="Samuel J.E."/>
            <person name="Fraser C.M."/>
            <person name="Heidelberg J.F."/>
        </authorList>
    </citation>
    <scope>NUCLEOTIDE SEQUENCE [LARGE SCALE GENOMIC DNA]</scope>
    <source>
        <strain>RSA 493 / Nine Mile phase I</strain>
    </source>
</reference>
<proteinExistence type="inferred from homology"/>
<dbReference type="EMBL" id="AE016828">
    <property type="protein sequence ID" value="AAO89785.1"/>
    <property type="molecule type" value="Genomic_DNA"/>
</dbReference>
<dbReference type="RefSeq" id="NP_819271.1">
    <property type="nucleotide sequence ID" value="NC_002971.4"/>
</dbReference>
<dbReference type="RefSeq" id="WP_010957445.1">
    <property type="nucleotide sequence ID" value="NC_002971.4"/>
</dbReference>
<dbReference type="SMR" id="Q83ET3"/>
<dbReference type="STRING" id="227377.CBU_0227"/>
<dbReference type="DNASU" id="1208108"/>
<dbReference type="EnsemblBacteria" id="AAO89785">
    <property type="protein sequence ID" value="AAO89785"/>
    <property type="gene ID" value="CBU_0227"/>
</dbReference>
<dbReference type="GeneID" id="1208108"/>
<dbReference type="KEGG" id="cbu:CBU_0227"/>
<dbReference type="PATRIC" id="fig|227377.7.peg.221"/>
<dbReference type="eggNOG" id="COG0081">
    <property type="taxonomic scope" value="Bacteria"/>
</dbReference>
<dbReference type="HOGENOM" id="CLU_062853_0_0_6"/>
<dbReference type="OrthoDB" id="9803740at2"/>
<dbReference type="Proteomes" id="UP000002671">
    <property type="component" value="Chromosome"/>
</dbReference>
<dbReference type="GO" id="GO:0022625">
    <property type="term" value="C:cytosolic large ribosomal subunit"/>
    <property type="evidence" value="ECO:0000318"/>
    <property type="project" value="GO_Central"/>
</dbReference>
<dbReference type="GO" id="GO:0019843">
    <property type="term" value="F:rRNA binding"/>
    <property type="evidence" value="ECO:0007669"/>
    <property type="project" value="UniProtKB-UniRule"/>
</dbReference>
<dbReference type="GO" id="GO:0003735">
    <property type="term" value="F:structural constituent of ribosome"/>
    <property type="evidence" value="ECO:0007669"/>
    <property type="project" value="InterPro"/>
</dbReference>
<dbReference type="GO" id="GO:0000049">
    <property type="term" value="F:tRNA binding"/>
    <property type="evidence" value="ECO:0007669"/>
    <property type="project" value="UniProtKB-KW"/>
</dbReference>
<dbReference type="GO" id="GO:0006417">
    <property type="term" value="P:regulation of translation"/>
    <property type="evidence" value="ECO:0007669"/>
    <property type="project" value="UniProtKB-KW"/>
</dbReference>
<dbReference type="GO" id="GO:0006412">
    <property type="term" value="P:translation"/>
    <property type="evidence" value="ECO:0007669"/>
    <property type="project" value="UniProtKB-UniRule"/>
</dbReference>
<dbReference type="CDD" id="cd00403">
    <property type="entry name" value="Ribosomal_L1"/>
    <property type="match status" value="1"/>
</dbReference>
<dbReference type="FunFam" id="3.40.50.790:FF:000001">
    <property type="entry name" value="50S ribosomal protein L1"/>
    <property type="match status" value="1"/>
</dbReference>
<dbReference type="Gene3D" id="3.30.190.20">
    <property type="match status" value="1"/>
</dbReference>
<dbReference type="Gene3D" id="3.40.50.790">
    <property type="match status" value="1"/>
</dbReference>
<dbReference type="HAMAP" id="MF_01318_B">
    <property type="entry name" value="Ribosomal_uL1_B"/>
    <property type="match status" value="1"/>
</dbReference>
<dbReference type="InterPro" id="IPR005878">
    <property type="entry name" value="Ribosom_uL1_bac-type"/>
</dbReference>
<dbReference type="InterPro" id="IPR002143">
    <property type="entry name" value="Ribosomal_uL1"/>
</dbReference>
<dbReference type="InterPro" id="IPR023674">
    <property type="entry name" value="Ribosomal_uL1-like"/>
</dbReference>
<dbReference type="InterPro" id="IPR028364">
    <property type="entry name" value="Ribosomal_uL1/biogenesis"/>
</dbReference>
<dbReference type="InterPro" id="IPR016095">
    <property type="entry name" value="Ribosomal_uL1_3-a/b-sand"/>
</dbReference>
<dbReference type="InterPro" id="IPR023673">
    <property type="entry name" value="Ribosomal_uL1_CS"/>
</dbReference>
<dbReference type="NCBIfam" id="TIGR01169">
    <property type="entry name" value="rplA_bact"/>
    <property type="match status" value="1"/>
</dbReference>
<dbReference type="PANTHER" id="PTHR36427">
    <property type="entry name" value="54S RIBOSOMAL PROTEIN L1, MITOCHONDRIAL"/>
    <property type="match status" value="1"/>
</dbReference>
<dbReference type="PANTHER" id="PTHR36427:SF3">
    <property type="entry name" value="LARGE RIBOSOMAL SUBUNIT PROTEIN UL1M"/>
    <property type="match status" value="1"/>
</dbReference>
<dbReference type="Pfam" id="PF00687">
    <property type="entry name" value="Ribosomal_L1"/>
    <property type="match status" value="1"/>
</dbReference>
<dbReference type="PIRSF" id="PIRSF002155">
    <property type="entry name" value="Ribosomal_L1"/>
    <property type="match status" value="1"/>
</dbReference>
<dbReference type="SUPFAM" id="SSF56808">
    <property type="entry name" value="Ribosomal protein L1"/>
    <property type="match status" value="1"/>
</dbReference>
<dbReference type="PROSITE" id="PS01199">
    <property type="entry name" value="RIBOSOMAL_L1"/>
    <property type="match status" value="1"/>
</dbReference>
<feature type="chain" id="PRO_0000125650" description="Large ribosomal subunit protein uL1">
    <location>
        <begin position="1"/>
        <end position="232"/>
    </location>
</feature>
<organism>
    <name type="scientific">Coxiella burnetii (strain RSA 493 / Nine Mile phase I)</name>
    <dbReference type="NCBI Taxonomy" id="227377"/>
    <lineage>
        <taxon>Bacteria</taxon>
        <taxon>Pseudomonadati</taxon>
        <taxon>Pseudomonadota</taxon>
        <taxon>Gammaproteobacteria</taxon>
        <taxon>Legionellales</taxon>
        <taxon>Coxiellaceae</taxon>
        <taxon>Coxiella</taxon>
    </lineage>
</organism>
<protein>
    <recommendedName>
        <fullName evidence="1">Large ribosomal subunit protein uL1</fullName>
    </recommendedName>
    <alternativeName>
        <fullName evidence="2">50S ribosomal protein L1</fullName>
    </alternativeName>
</protein>
<comment type="function">
    <text evidence="1">Binds directly to 23S rRNA. The L1 stalk is quite mobile in the ribosome, and is involved in E site tRNA release.</text>
</comment>
<comment type="function">
    <text evidence="1">Protein L1 is also a translational repressor protein, it controls the translation of the L11 operon by binding to its mRNA.</text>
</comment>
<comment type="subunit">
    <text evidence="1">Part of the 50S ribosomal subunit.</text>
</comment>
<comment type="similarity">
    <text evidence="1">Belongs to the universal ribosomal protein uL1 family.</text>
</comment>
<sequence length="232" mass="24725">MAAKLTKKRKTLAEKVQRDKTYPLSEAIKLIKECAKAKFNESIDVAINLGIDSRKSDQAIRGATVLPHGSGRTVKVAVFAQGDNVEKAKAAGADIVGLDDLAERIQGGDIDFDVVIATPETMRVVGKLGQVLGPRGLMPNPKVGTVTTDVASAVKNAKQGQVRYRTDKNGIIHCTIGKVNFEEKALEENFLALLNDIKKAKPSAAKGTYLKKLTLSSTMGPGIAIDRTTVGA</sequence>
<evidence type="ECO:0000255" key="1">
    <source>
        <dbReference type="HAMAP-Rule" id="MF_01318"/>
    </source>
</evidence>
<evidence type="ECO:0000305" key="2"/>
<accession>Q83ET3</accession>